<evidence type="ECO:0000250" key="1"/>
<evidence type="ECO:0000255" key="2">
    <source>
        <dbReference type="PROSITE-ProRule" id="PRU00146"/>
    </source>
</evidence>
<evidence type="ECO:0000256" key="3">
    <source>
        <dbReference type="SAM" id="MobiDB-lite"/>
    </source>
</evidence>
<evidence type="ECO:0000269" key="4">
    <source>
    </source>
</evidence>
<evidence type="ECO:0000305" key="5"/>
<evidence type="ECO:0007744" key="6">
    <source>
    </source>
</evidence>
<evidence type="ECO:0007829" key="7">
    <source>
        <dbReference type="PDB" id="5XVJ"/>
    </source>
</evidence>
<protein>
    <recommendedName>
        <fullName>PHD finger protein ALFIN-LIKE 7</fullName>
        <shortName>Protein AL7</shortName>
    </recommendedName>
</protein>
<feature type="chain" id="PRO_0000412934" description="PHD finger protein ALFIN-LIKE 7">
    <location>
        <begin position="1"/>
        <end position="252"/>
    </location>
</feature>
<feature type="zinc finger region" description="PHD-type" evidence="2">
    <location>
        <begin position="195"/>
        <end position="247"/>
    </location>
</feature>
<feature type="region of interest" description="Disordered" evidence="3">
    <location>
        <begin position="141"/>
        <end position="193"/>
    </location>
</feature>
<feature type="compositionally biased region" description="Low complexity" evidence="3">
    <location>
        <begin position="149"/>
        <end position="161"/>
    </location>
</feature>
<feature type="compositionally biased region" description="Acidic residues" evidence="3">
    <location>
        <begin position="184"/>
        <end position="193"/>
    </location>
</feature>
<feature type="site" description="Histone H3K4me3 binding">
    <location>
        <position position="205"/>
    </location>
</feature>
<feature type="site" description="Histone H3K4me3 binding">
    <location>
        <position position="211"/>
    </location>
</feature>
<feature type="site" description="Histone H3K4me3 binding">
    <location>
        <position position="215"/>
    </location>
</feature>
<feature type="site" description="Histone H3K4me3 binding" evidence="1">
    <location>
        <position position="220"/>
    </location>
</feature>
<feature type="modified residue" description="Phosphoserine" evidence="6">
    <location>
        <position position="176"/>
    </location>
</feature>
<feature type="mutagenesis site" description="Slightly affects binding to H3K4me2/3." evidence="4">
    <original>Y</original>
    <variation>L</variation>
    <location>
        <position position="205"/>
    </location>
</feature>
<feature type="mutagenesis site" description="Abolishes binding to H3K4me2/3." evidence="4">
    <original>W</original>
    <variation>M</variation>
    <location>
        <position position="211"/>
    </location>
</feature>
<feature type="mutagenesis site" description="Abolishes binding to H3K4me2/3." evidence="4">
    <original>D</original>
    <variation>N</variation>
    <location>
        <position position="215"/>
    </location>
</feature>
<feature type="mutagenesis site" description="Does not affect binding to H3K4me2/3." evidence="4">
    <original>E</original>
    <variation>Q</variation>
    <location>
        <position position="218"/>
    </location>
</feature>
<feature type="helix" evidence="7">
    <location>
        <begin position="10"/>
        <end position="30"/>
    </location>
</feature>
<feature type="turn" evidence="7">
    <location>
        <begin position="31"/>
        <end position="33"/>
    </location>
</feature>
<feature type="helix" evidence="7">
    <location>
        <begin position="34"/>
        <end position="40"/>
    </location>
</feature>
<feature type="strand" evidence="7">
    <location>
        <begin position="49"/>
        <end position="53"/>
    </location>
</feature>
<feature type="turn" evidence="7">
    <location>
        <begin position="54"/>
        <end position="56"/>
    </location>
</feature>
<feature type="strand" evidence="7">
    <location>
        <begin position="57"/>
        <end position="61"/>
    </location>
</feature>
<feature type="helix" evidence="7">
    <location>
        <begin position="78"/>
        <end position="81"/>
    </location>
</feature>
<feature type="helix" evidence="7">
    <location>
        <begin position="82"/>
        <end position="84"/>
    </location>
</feature>
<feature type="helix" evidence="7">
    <location>
        <begin position="87"/>
        <end position="112"/>
    </location>
</feature>
<feature type="helix" evidence="7">
    <location>
        <begin position="117"/>
        <end position="128"/>
    </location>
</feature>
<feature type="helix" evidence="7">
    <location>
        <begin position="133"/>
        <end position="137"/>
    </location>
</feature>
<reference key="1">
    <citation type="journal article" date="2000" name="Nature">
        <title>Sequence and analysis of chromosome 1 of the plant Arabidopsis thaliana.</title>
        <authorList>
            <person name="Theologis A."/>
            <person name="Ecker J.R."/>
            <person name="Palm C.J."/>
            <person name="Federspiel N.A."/>
            <person name="Kaul S."/>
            <person name="White O."/>
            <person name="Alonso J."/>
            <person name="Altafi H."/>
            <person name="Araujo R."/>
            <person name="Bowman C.L."/>
            <person name="Brooks S.Y."/>
            <person name="Buehler E."/>
            <person name="Chan A."/>
            <person name="Chao Q."/>
            <person name="Chen H."/>
            <person name="Cheuk R.F."/>
            <person name="Chin C.W."/>
            <person name="Chung M.K."/>
            <person name="Conn L."/>
            <person name="Conway A.B."/>
            <person name="Conway A.R."/>
            <person name="Creasy T.H."/>
            <person name="Dewar K."/>
            <person name="Dunn P."/>
            <person name="Etgu P."/>
            <person name="Feldblyum T.V."/>
            <person name="Feng J.-D."/>
            <person name="Fong B."/>
            <person name="Fujii C.Y."/>
            <person name="Gill J.E."/>
            <person name="Goldsmith A.D."/>
            <person name="Haas B."/>
            <person name="Hansen N.F."/>
            <person name="Hughes B."/>
            <person name="Huizar L."/>
            <person name="Hunter J.L."/>
            <person name="Jenkins J."/>
            <person name="Johnson-Hopson C."/>
            <person name="Khan S."/>
            <person name="Khaykin E."/>
            <person name="Kim C.J."/>
            <person name="Koo H.L."/>
            <person name="Kremenetskaia I."/>
            <person name="Kurtz D.B."/>
            <person name="Kwan A."/>
            <person name="Lam B."/>
            <person name="Langin-Hooper S."/>
            <person name="Lee A."/>
            <person name="Lee J.M."/>
            <person name="Lenz C.A."/>
            <person name="Li J.H."/>
            <person name="Li Y.-P."/>
            <person name="Lin X."/>
            <person name="Liu S.X."/>
            <person name="Liu Z.A."/>
            <person name="Luros J.S."/>
            <person name="Maiti R."/>
            <person name="Marziali A."/>
            <person name="Militscher J."/>
            <person name="Miranda M."/>
            <person name="Nguyen M."/>
            <person name="Nierman W.C."/>
            <person name="Osborne B.I."/>
            <person name="Pai G."/>
            <person name="Peterson J."/>
            <person name="Pham P.K."/>
            <person name="Rizzo M."/>
            <person name="Rooney T."/>
            <person name="Rowley D."/>
            <person name="Sakano H."/>
            <person name="Salzberg S.L."/>
            <person name="Schwartz J.R."/>
            <person name="Shinn P."/>
            <person name="Southwick A.M."/>
            <person name="Sun H."/>
            <person name="Tallon L.J."/>
            <person name="Tambunga G."/>
            <person name="Toriumi M.J."/>
            <person name="Town C.D."/>
            <person name="Utterback T."/>
            <person name="Van Aken S."/>
            <person name="Vaysberg M."/>
            <person name="Vysotskaia V.S."/>
            <person name="Walker M."/>
            <person name="Wu D."/>
            <person name="Yu G."/>
            <person name="Fraser C.M."/>
            <person name="Venter J.C."/>
            <person name="Davis R.W."/>
        </authorList>
    </citation>
    <scope>NUCLEOTIDE SEQUENCE [LARGE SCALE GENOMIC DNA]</scope>
    <source>
        <strain>cv. Columbia</strain>
    </source>
</reference>
<reference key="2">
    <citation type="journal article" date="2017" name="Plant J.">
        <title>Araport11: a complete reannotation of the Arabidopsis thaliana reference genome.</title>
        <authorList>
            <person name="Cheng C.Y."/>
            <person name="Krishnakumar V."/>
            <person name="Chan A.P."/>
            <person name="Thibaud-Nissen F."/>
            <person name="Schobel S."/>
            <person name="Town C.D."/>
        </authorList>
    </citation>
    <scope>GENOME REANNOTATION</scope>
    <source>
        <strain>cv. Columbia</strain>
    </source>
</reference>
<reference key="3">
    <citation type="journal article" date="2003" name="Science">
        <title>Empirical analysis of transcriptional activity in the Arabidopsis genome.</title>
        <authorList>
            <person name="Yamada K."/>
            <person name="Lim J."/>
            <person name="Dale J.M."/>
            <person name="Chen H."/>
            <person name="Shinn P."/>
            <person name="Palm C.J."/>
            <person name="Southwick A.M."/>
            <person name="Wu H.C."/>
            <person name="Kim C.J."/>
            <person name="Nguyen M."/>
            <person name="Pham P.K."/>
            <person name="Cheuk R.F."/>
            <person name="Karlin-Newmann G."/>
            <person name="Liu S.X."/>
            <person name="Lam B."/>
            <person name="Sakano H."/>
            <person name="Wu T."/>
            <person name="Yu G."/>
            <person name="Miranda M."/>
            <person name="Quach H.L."/>
            <person name="Tripp M."/>
            <person name="Chang C.H."/>
            <person name="Lee J.M."/>
            <person name="Toriumi M.J."/>
            <person name="Chan M.M."/>
            <person name="Tang C.C."/>
            <person name="Onodera C.S."/>
            <person name="Deng J.M."/>
            <person name="Akiyama K."/>
            <person name="Ansari Y."/>
            <person name="Arakawa T."/>
            <person name="Banh J."/>
            <person name="Banno F."/>
            <person name="Bowser L."/>
            <person name="Brooks S.Y."/>
            <person name="Carninci P."/>
            <person name="Chao Q."/>
            <person name="Choy N."/>
            <person name="Enju A."/>
            <person name="Goldsmith A.D."/>
            <person name="Gurjal M."/>
            <person name="Hansen N.F."/>
            <person name="Hayashizaki Y."/>
            <person name="Johnson-Hopson C."/>
            <person name="Hsuan V.W."/>
            <person name="Iida K."/>
            <person name="Karnes M."/>
            <person name="Khan S."/>
            <person name="Koesema E."/>
            <person name="Ishida J."/>
            <person name="Jiang P.X."/>
            <person name="Jones T."/>
            <person name="Kawai J."/>
            <person name="Kamiya A."/>
            <person name="Meyers C."/>
            <person name="Nakajima M."/>
            <person name="Narusaka M."/>
            <person name="Seki M."/>
            <person name="Sakurai T."/>
            <person name="Satou M."/>
            <person name="Tamse R."/>
            <person name="Vaysberg M."/>
            <person name="Wallender E.K."/>
            <person name="Wong C."/>
            <person name="Yamamura Y."/>
            <person name="Yuan S."/>
            <person name="Shinozaki K."/>
            <person name="Davis R.W."/>
            <person name="Theologis A."/>
            <person name="Ecker J.R."/>
        </authorList>
    </citation>
    <scope>NUCLEOTIDE SEQUENCE [LARGE SCALE MRNA]</scope>
    <source>
        <strain>cv. Columbia</strain>
    </source>
</reference>
<reference key="4">
    <citation type="submission" date="2006-07" db="EMBL/GenBank/DDBJ databases">
        <title>Large-scale analysis of RIKEN Arabidopsis full-length (RAFL) cDNAs.</title>
        <authorList>
            <person name="Totoki Y."/>
            <person name="Seki M."/>
            <person name="Ishida J."/>
            <person name="Nakajima M."/>
            <person name="Enju A."/>
            <person name="Kamiya A."/>
            <person name="Narusaka M."/>
            <person name="Shin-i T."/>
            <person name="Nakagawa M."/>
            <person name="Sakamoto N."/>
            <person name="Oishi K."/>
            <person name="Kohara Y."/>
            <person name="Kobayashi M."/>
            <person name="Toyoda A."/>
            <person name="Sakaki Y."/>
            <person name="Sakurai T."/>
            <person name="Iida K."/>
            <person name="Akiyama K."/>
            <person name="Satou M."/>
            <person name="Toyoda T."/>
            <person name="Konagaya A."/>
            <person name="Carninci P."/>
            <person name="Kawai J."/>
            <person name="Hayashizaki Y."/>
            <person name="Shinozaki K."/>
        </authorList>
    </citation>
    <scope>NUCLEOTIDE SEQUENCE [LARGE SCALE MRNA]</scope>
    <source>
        <strain>cv. Columbia</strain>
    </source>
</reference>
<reference key="5">
    <citation type="submission" date="2002-03" db="EMBL/GenBank/DDBJ databases">
        <title>Full-length cDNA from Arabidopsis thaliana.</title>
        <authorList>
            <person name="Brover V.V."/>
            <person name="Troukhan M.E."/>
            <person name="Alexandrov N.A."/>
            <person name="Lu Y.-P."/>
            <person name="Flavell R.B."/>
            <person name="Feldmann K.A."/>
        </authorList>
    </citation>
    <scope>NUCLEOTIDE SEQUENCE [LARGE SCALE MRNA]</scope>
</reference>
<reference key="6">
    <citation type="journal article" date="2009" name="Plant J.">
        <title>Arabidopsis ING and Alfin1-like protein families localize to the nucleus and bind to H3K4me3/2 via plant homeodomain fingers.</title>
        <authorList>
            <person name="Lee W.Y."/>
            <person name="Lee D."/>
            <person name="Chung W.I."/>
            <person name="Kwon C.S."/>
        </authorList>
    </citation>
    <scope>GENE FAMILY</scope>
    <scope>SUBCELLULAR LOCATION</scope>
    <scope>INTERACTION WITH HISTONES H3K4ME3 AND H3K4ME2</scope>
    <scope>DOMAIN PHD-TYPE ZINC-FINGER</scope>
    <scope>TISSUE SPECIFICITY</scope>
    <scope>MUTAGENESIS OF TYR-205; TRP-211; ASP-215 AND GLU-218</scope>
</reference>
<reference key="7">
    <citation type="journal article" date="2009" name="Plant Physiol.">
        <title>Large-scale Arabidopsis phosphoproteome profiling reveals novel chloroplast kinase substrates and phosphorylation networks.</title>
        <authorList>
            <person name="Reiland S."/>
            <person name="Messerli G."/>
            <person name="Baerenfaller K."/>
            <person name="Gerrits B."/>
            <person name="Endler A."/>
            <person name="Grossmann J."/>
            <person name="Gruissem W."/>
            <person name="Baginsky S."/>
        </authorList>
    </citation>
    <scope>PHOSPHORYLATION [LARGE SCALE ANALYSIS] AT SER-176</scope>
    <scope>IDENTIFICATION BY MASS SPECTROMETRY [LARGE SCALE ANALYSIS]</scope>
</reference>
<proteinExistence type="evidence at protein level"/>
<name>ALFL7_ARATH</name>
<gene>
    <name type="primary">AL7</name>
    <name type="ordered locus">At1g14510</name>
    <name type="ORF">F14L17.29</name>
    <name type="ORF">T5E21.1</name>
</gene>
<comment type="function">
    <text evidence="1">Histone-binding component that specifically recognizes H3 tails trimethylated on 'Lys-4' (H3K4me3), which mark transcription start sites of virtually all active genes.</text>
</comment>
<comment type="subunit">
    <text evidence="4">Interacts with H3K4me3 and to a lesser extent with H3K4me2.</text>
</comment>
<comment type="subcellular location">
    <subcellularLocation>
        <location evidence="4">Nucleus</location>
    </subcellularLocation>
</comment>
<comment type="tissue specificity">
    <text evidence="4">Ubiquitously expressed.</text>
</comment>
<comment type="domain">
    <text evidence="4">The PHD-type zinc finger mediates the binding to H3K4me3.</text>
</comment>
<comment type="similarity">
    <text evidence="5">Belongs to the Alfin family.</text>
</comment>
<comment type="sequence caution" evidence="5">
    <conflict type="erroneous gene model prediction">
        <sequence resource="EMBL-CDS" id="AAF43952"/>
    </conflict>
</comment>
<comment type="sequence caution" evidence="5">
    <conflict type="erroneous gene model prediction">
        <sequence resource="EMBL-CDS" id="AAF63181"/>
    </conflict>
</comment>
<sequence>MEGIQHPIPRTVEEVFSDFRGRRAGLIKALSTDVQKFYHQCDPEKENLCLYGLPNETWEVNLPVEEVPPELPEPALGINFARDGMQEKDWISLVAVHSDSWLISVAFYFGARFGFGKNERKRLFQMINDLPTIFEVVTGNAKQSKDQSANHNSSRSKSSGGKPRHSESHTKASKMSPPPRKEDESGDEDEDDEQGAVCGACGDNYGGDEFWICCDACEKWFHGKCVKITPAKAEHIKHYKCPSCTTSKKMKA</sequence>
<dbReference type="EMBL" id="AC010657">
    <property type="protein sequence ID" value="AAF63181.1"/>
    <property type="status" value="ALT_SEQ"/>
    <property type="molecule type" value="Genomic_DNA"/>
</dbReference>
<dbReference type="EMBL" id="AC012188">
    <property type="protein sequence ID" value="AAF43952.1"/>
    <property type="status" value="ALT_SEQ"/>
    <property type="molecule type" value="Genomic_DNA"/>
</dbReference>
<dbReference type="EMBL" id="CP002684">
    <property type="protein sequence ID" value="AEE29173.1"/>
    <property type="molecule type" value="Genomic_DNA"/>
</dbReference>
<dbReference type="EMBL" id="BT006199">
    <property type="protein sequence ID" value="AAP12848.1"/>
    <property type="molecule type" value="mRNA"/>
</dbReference>
<dbReference type="EMBL" id="AK228067">
    <property type="protein sequence ID" value="BAF00027.1"/>
    <property type="molecule type" value="mRNA"/>
</dbReference>
<dbReference type="EMBL" id="AY088087">
    <property type="protein sequence ID" value="AAM65633.1"/>
    <property type="molecule type" value="mRNA"/>
</dbReference>
<dbReference type="PIR" id="A86280">
    <property type="entry name" value="A86280"/>
</dbReference>
<dbReference type="RefSeq" id="NP_172903.1">
    <property type="nucleotide sequence ID" value="NM_101318.4"/>
</dbReference>
<dbReference type="PDB" id="5XVJ">
    <property type="method" value="X-ray"/>
    <property type="resolution" value="1.40 A"/>
    <property type="chains" value="A/B=9-141"/>
</dbReference>
<dbReference type="PDBsum" id="5XVJ"/>
<dbReference type="SMR" id="Q8LA16"/>
<dbReference type="BioGRID" id="23253">
    <property type="interactions" value="13"/>
</dbReference>
<dbReference type="FunCoup" id="Q8LA16">
    <property type="interactions" value="2465"/>
</dbReference>
<dbReference type="IntAct" id="Q8LA16">
    <property type="interactions" value="5"/>
</dbReference>
<dbReference type="STRING" id="3702.Q8LA16"/>
<dbReference type="iPTMnet" id="Q8LA16"/>
<dbReference type="PaxDb" id="3702-AT1G14510.1"/>
<dbReference type="ProteomicsDB" id="244980"/>
<dbReference type="EnsemblPlants" id="AT1G14510.1">
    <property type="protein sequence ID" value="AT1G14510.1"/>
    <property type="gene ID" value="AT1G14510"/>
</dbReference>
<dbReference type="GeneID" id="838013"/>
<dbReference type="Gramene" id="AT1G14510.1">
    <property type="protein sequence ID" value="AT1G14510.1"/>
    <property type="gene ID" value="AT1G14510"/>
</dbReference>
<dbReference type="KEGG" id="ath:AT1G14510"/>
<dbReference type="Araport" id="AT1G14510"/>
<dbReference type="TAIR" id="AT1G14510">
    <property type="gene designation" value="AL7"/>
</dbReference>
<dbReference type="eggNOG" id="KOG1632">
    <property type="taxonomic scope" value="Eukaryota"/>
</dbReference>
<dbReference type="HOGENOM" id="CLU_058315_1_0_1"/>
<dbReference type="InParanoid" id="Q8LA16"/>
<dbReference type="OMA" id="YGGDEFW"/>
<dbReference type="OrthoDB" id="436852at2759"/>
<dbReference type="PhylomeDB" id="Q8LA16"/>
<dbReference type="CD-CODE" id="4299E36E">
    <property type="entry name" value="Nucleolus"/>
</dbReference>
<dbReference type="PRO" id="PR:Q8LA16"/>
<dbReference type="Proteomes" id="UP000006548">
    <property type="component" value="Chromosome 1"/>
</dbReference>
<dbReference type="ExpressionAtlas" id="Q8LA16">
    <property type="expression patterns" value="baseline and differential"/>
</dbReference>
<dbReference type="GO" id="GO:0005634">
    <property type="term" value="C:nucleus"/>
    <property type="evidence" value="ECO:0000314"/>
    <property type="project" value="TAIR"/>
</dbReference>
<dbReference type="GO" id="GO:0035064">
    <property type="term" value="F:methylated histone binding"/>
    <property type="evidence" value="ECO:0000314"/>
    <property type="project" value="TAIR"/>
</dbReference>
<dbReference type="GO" id="GO:0000976">
    <property type="term" value="F:transcription cis-regulatory region binding"/>
    <property type="evidence" value="ECO:0000353"/>
    <property type="project" value="TAIR"/>
</dbReference>
<dbReference type="GO" id="GO:0008270">
    <property type="term" value="F:zinc ion binding"/>
    <property type="evidence" value="ECO:0007669"/>
    <property type="project" value="UniProtKB-KW"/>
</dbReference>
<dbReference type="GO" id="GO:0006325">
    <property type="term" value="P:chromatin organization"/>
    <property type="evidence" value="ECO:0007669"/>
    <property type="project" value="UniProtKB-KW"/>
</dbReference>
<dbReference type="GO" id="GO:0006355">
    <property type="term" value="P:regulation of DNA-templated transcription"/>
    <property type="evidence" value="ECO:0007669"/>
    <property type="project" value="InterPro"/>
</dbReference>
<dbReference type="CDD" id="cd15613">
    <property type="entry name" value="PHD_AL_plant"/>
    <property type="match status" value="1"/>
</dbReference>
<dbReference type="FunFam" id="3.30.40.10:FF:000306">
    <property type="entry name" value="PHD finger alfin-like protein"/>
    <property type="match status" value="1"/>
</dbReference>
<dbReference type="Gene3D" id="3.30.40.10">
    <property type="entry name" value="Zinc/RING finger domain, C3HC4 (zinc finger)"/>
    <property type="match status" value="1"/>
</dbReference>
<dbReference type="InterPro" id="IPR045104">
    <property type="entry name" value="Alfin"/>
</dbReference>
<dbReference type="InterPro" id="IPR021998">
    <property type="entry name" value="Alfin_N"/>
</dbReference>
<dbReference type="InterPro" id="IPR044104">
    <property type="entry name" value="PHD_AL_plant"/>
</dbReference>
<dbReference type="InterPro" id="IPR019786">
    <property type="entry name" value="Zinc_finger_PHD-type_CS"/>
</dbReference>
<dbReference type="InterPro" id="IPR011011">
    <property type="entry name" value="Znf_FYVE_PHD"/>
</dbReference>
<dbReference type="InterPro" id="IPR001965">
    <property type="entry name" value="Znf_PHD"/>
</dbReference>
<dbReference type="InterPro" id="IPR019787">
    <property type="entry name" value="Znf_PHD-finger"/>
</dbReference>
<dbReference type="InterPro" id="IPR013083">
    <property type="entry name" value="Znf_RING/FYVE/PHD"/>
</dbReference>
<dbReference type="PANTHER" id="PTHR12321">
    <property type="entry name" value="CPG BINDING PROTEIN"/>
    <property type="match status" value="1"/>
</dbReference>
<dbReference type="PANTHER" id="PTHR12321:SF110">
    <property type="entry name" value="PHD FINGER PROTEIN ALFIN-LIKE 7"/>
    <property type="match status" value="1"/>
</dbReference>
<dbReference type="Pfam" id="PF12165">
    <property type="entry name" value="Alfin"/>
    <property type="match status" value="1"/>
</dbReference>
<dbReference type="Pfam" id="PF00628">
    <property type="entry name" value="PHD"/>
    <property type="match status" value="1"/>
</dbReference>
<dbReference type="SMART" id="SM00249">
    <property type="entry name" value="PHD"/>
    <property type="match status" value="1"/>
</dbReference>
<dbReference type="SUPFAM" id="SSF57903">
    <property type="entry name" value="FYVE/PHD zinc finger"/>
    <property type="match status" value="1"/>
</dbReference>
<dbReference type="PROSITE" id="PS01359">
    <property type="entry name" value="ZF_PHD_1"/>
    <property type="match status" value="1"/>
</dbReference>
<dbReference type="PROSITE" id="PS50016">
    <property type="entry name" value="ZF_PHD_2"/>
    <property type="match status" value="1"/>
</dbReference>
<organism>
    <name type="scientific">Arabidopsis thaliana</name>
    <name type="common">Mouse-ear cress</name>
    <dbReference type="NCBI Taxonomy" id="3702"/>
    <lineage>
        <taxon>Eukaryota</taxon>
        <taxon>Viridiplantae</taxon>
        <taxon>Streptophyta</taxon>
        <taxon>Embryophyta</taxon>
        <taxon>Tracheophyta</taxon>
        <taxon>Spermatophyta</taxon>
        <taxon>Magnoliopsida</taxon>
        <taxon>eudicotyledons</taxon>
        <taxon>Gunneridae</taxon>
        <taxon>Pentapetalae</taxon>
        <taxon>rosids</taxon>
        <taxon>malvids</taxon>
        <taxon>Brassicales</taxon>
        <taxon>Brassicaceae</taxon>
        <taxon>Camelineae</taxon>
        <taxon>Arabidopsis</taxon>
    </lineage>
</organism>
<keyword id="KW-0002">3D-structure</keyword>
<keyword id="KW-0156">Chromatin regulator</keyword>
<keyword id="KW-0479">Metal-binding</keyword>
<keyword id="KW-0539">Nucleus</keyword>
<keyword id="KW-0597">Phosphoprotein</keyword>
<keyword id="KW-1185">Reference proteome</keyword>
<keyword id="KW-0804">Transcription</keyword>
<keyword id="KW-0805">Transcription regulation</keyword>
<keyword id="KW-0862">Zinc</keyword>
<keyword id="KW-0863">Zinc-finger</keyword>
<accession>Q8LA16</accession>
<accession>Q9M9R2</accession>
<accession>Q9MA31</accession>